<name>DHRS9_BOVIN</name>
<sequence>MLFWLLVLLILCGFLWNYKRQLKIANITDKYIFITGCDTGFGNLAARTFDKKGFHVIAACLTESGSTALKAETSERLHTVLLDVTDPENVKRAAQWVKNQVGEKGLWGLINNAGILGVLAPNDWLTVEDYREPVEVNLFGLISVTLNMLPLVKKARGRIINVSSIGGRLAFGGGGYSPSKYAVEGFNDSLRRDMKAFGVHVACIEPGLFKTNLSDPEKTAEKKLAIWKHLSPDIKQQYGESYIEKSLEQLKGTASFVNVDLSLVVECMDHALTSLFPKTRYAAGKDAKTFWIPLSHMPAVLQDFLLLKQKVELANPRAV</sequence>
<accession>Q8HYR6</accession>
<evidence type="ECO:0000250" key="1"/>
<evidence type="ECO:0000250" key="2">
    <source>
        <dbReference type="UniProtKB" id="Q8VD48"/>
    </source>
</evidence>
<evidence type="ECO:0000250" key="3">
    <source>
        <dbReference type="UniProtKB" id="Q9BPW9"/>
    </source>
</evidence>
<evidence type="ECO:0000255" key="4"/>
<evidence type="ECO:0000305" key="5"/>
<reference key="1">
    <citation type="journal article" date="2000" name="Methods Enzymol.">
        <title>Short-chain dehydrogenases/reductases in retina.</title>
        <authorList>
            <person name="Haeseleer F."/>
            <person name="Palczewski K."/>
        </authorList>
    </citation>
    <scope>NUCLEOTIDE SEQUENCE [MRNA]</scope>
    <source>
        <tissue>Eye</tissue>
    </source>
</reference>
<feature type="signal peptide" evidence="4">
    <location>
        <begin position="1"/>
        <end position="17"/>
    </location>
</feature>
<feature type="chain" id="PRO_0000042616" description="Dehydrogenase/reductase SDR family member 9">
    <location>
        <begin position="18"/>
        <end position="319"/>
    </location>
</feature>
<feature type="active site" description="Proton acceptor" evidence="3">
    <location>
        <position position="176"/>
    </location>
</feature>
<feature type="binding site" evidence="1">
    <location>
        <begin position="34"/>
        <end position="58"/>
    </location>
    <ligand>
        <name>NAD(+)</name>
        <dbReference type="ChEBI" id="CHEBI:57540"/>
    </ligand>
</feature>
<feature type="binding site" evidence="1">
    <location>
        <position position="83"/>
    </location>
    <ligand>
        <name>NAD(+)</name>
        <dbReference type="ChEBI" id="CHEBI:57540"/>
    </ligand>
</feature>
<feature type="binding site" evidence="1">
    <location>
        <position position="164"/>
    </location>
    <ligand>
        <name>substrate</name>
    </ligand>
</feature>
<feature type="binding site" evidence="1">
    <location>
        <position position="180"/>
    </location>
    <ligand>
        <name>NAD(+)</name>
        <dbReference type="ChEBI" id="CHEBI:57540"/>
    </ligand>
</feature>
<keyword id="KW-0256">Endoplasmic reticulum</keyword>
<keyword id="KW-0443">Lipid metabolism</keyword>
<keyword id="KW-0472">Membrane</keyword>
<keyword id="KW-0492">Microsome</keyword>
<keyword id="KW-0520">NAD</keyword>
<keyword id="KW-0521">NADP</keyword>
<keyword id="KW-0560">Oxidoreductase</keyword>
<keyword id="KW-1185">Reference proteome</keyword>
<keyword id="KW-0732">Signal</keyword>
<keyword id="KW-0753">Steroid metabolism</keyword>
<protein>
    <recommendedName>
        <fullName>Dehydrogenase/reductase SDR family member 9</fullName>
        <ecNumber evidence="3">1.1.1.209</ecNumber>
        <ecNumber evidence="3">1.1.1.53</ecNumber>
    </recommendedName>
    <alternativeName>
        <fullName>3-alpha hydroxysteroid dehydrogenase</fullName>
        <shortName>3-alpha-HSD</shortName>
    </alternativeName>
    <alternativeName>
        <fullName>Retinol dehydrogenase</fullName>
        <ecNumber evidence="3">1.1.1.105</ecNumber>
    </alternativeName>
    <alternativeName>
        <fullName>Short-chain dehydrogenase/reductase retSDR8</fullName>
    </alternativeName>
</protein>
<comment type="function">
    <text evidence="2 3">3-alpha-hydroxysteroid dehydrogenase that converts 3-alpha-tetrahydroprogesterone (allopregnanolone) to dihydroxyprogesterone and 3-alpha-androstanediol to dihydroxyprogesterone. Also plays a role in the biosynthesis of retinoic acid from retinaldehyde. Can utilize both NADH and NADPH.</text>
</comment>
<comment type="catalytic activity">
    <reaction evidence="3">
        <text>3beta-hydroxy-5alpha-pregnane-20-one + NAD(+) = 5alpha-pregnane-3,20-dione + NADH + H(+)</text>
        <dbReference type="Rhea" id="RHEA:41988"/>
        <dbReference type="ChEBI" id="CHEBI:11909"/>
        <dbReference type="ChEBI" id="CHEBI:15378"/>
        <dbReference type="ChEBI" id="CHEBI:28952"/>
        <dbReference type="ChEBI" id="CHEBI:57540"/>
        <dbReference type="ChEBI" id="CHEBI:57945"/>
    </reaction>
</comment>
<comment type="catalytic activity">
    <reaction evidence="3">
        <text>17beta-hydroxy-5alpha-androstan-3-one + NAD(+) = 5alpha-androstan-3,17-dione + NADH + H(+)</text>
        <dbReference type="Rhea" id="RHEA:41992"/>
        <dbReference type="ChEBI" id="CHEBI:15378"/>
        <dbReference type="ChEBI" id="CHEBI:15994"/>
        <dbReference type="ChEBI" id="CHEBI:16330"/>
        <dbReference type="ChEBI" id="CHEBI:57540"/>
        <dbReference type="ChEBI" id="CHEBI:57945"/>
    </reaction>
</comment>
<comment type="catalytic activity">
    <reaction evidence="3">
        <text>androsterone + NAD(+) = 5alpha-androstan-3,17-dione + NADH + H(+)</text>
        <dbReference type="Rhea" id="RHEA:20381"/>
        <dbReference type="ChEBI" id="CHEBI:15378"/>
        <dbReference type="ChEBI" id="CHEBI:15994"/>
        <dbReference type="ChEBI" id="CHEBI:16032"/>
        <dbReference type="ChEBI" id="CHEBI:57540"/>
        <dbReference type="ChEBI" id="CHEBI:57945"/>
        <dbReference type="EC" id="1.1.1.209"/>
    </reaction>
</comment>
<comment type="catalytic activity">
    <reaction evidence="3">
        <text>5alpha-androstane-3alpha,17beta-diol + NAD(+) = 17beta-hydroxy-5alpha-androstan-3-one + NADH + H(+)</text>
        <dbReference type="Rhea" id="RHEA:42004"/>
        <dbReference type="ChEBI" id="CHEBI:15378"/>
        <dbReference type="ChEBI" id="CHEBI:16330"/>
        <dbReference type="ChEBI" id="CHEBI:36713"/>
        <dbReference type="ChEBI" id="CHEBI:57540"/>
        <dbReference type="ChEBI" id="CHEBI:57945"/>
        <dbReference type="EC" id="1.1.1.53"/>
    </reaction>
</comment>
<comment type="catalytic activity">
    <reaction evidence="3">
        <text>all-trans-retinol + NAD(+) = all-trans-retinal + NADH + H(+)</text>
        <dbReference type="Rhea" id="RHEA:21284"/>
        <dbReference type="ChEBI" id="CHEBI:15378"/>
        <dbReference type="ChEBI" id="CHEBI:17336"/>
        <dbReference type="ChEBI" id="CHEBI:17898"/>
        <dbReference type="ChEBI" id="CHEBI:57540"/>
        <dbReference type="ChEBI" id="CHEBI:57945"/>
        <dbReference type="EC" id="1.1.1.105"/>
    </reaction>
</comment>
<comment type="catalytic activity">
    <reaction evidence="3">
        <text>3alpha-hydroxy-5alpha-pregnan-20-one + NAD(+) = 5alpha-pregnane-3,20-dione + NADH + H(+)</text>
        <dbReference type="Rhea" id="RHEA:41980"/>
        <dbReference type="ChEBI" id="CHEBI:15378"/>
        <dbReference type="ChEBI" id="CHEBI:28952"/>
        <dbReference type="ChEBI" id="CHEBI:50169"/>
        <dbReference type="ChEBI" id="CHEBI:57540"/>
        <dbReference type="ChEBI" id="CHEBI:57945"/>
    </reaction>
</comment>
<comment type="subunit">
    <text evidence="1">Homotetramer.</text>
</comment>
<comment type="subcellular location">
    <subcellularLocation>
        <location evidence="3">Microsome membrane</location>
    </subcellularLocation>
    <subcellularLocation>
        <location evidence="3">Endoplasmic reticulum membrane</location>
    </subcellularLocation>
</comment>
<comment type="similarity">
    <text evidence="5">Belongs to the short-chain dehydrogenases/reductases (SDR) family.</text>
</comment>
<organism>
    <name type="scientific">Bos taurus</name>
    <name type="common">Bovine</name>
    <dbReference type="NCBI Taxonomy" id="9913"/>
    <lineage>
        <taxon>Eukaryota</taxon>
        <taxon>Metazoa</taxon>
        <taxon>Chordata</taxon>
        <taxon>Craniata</taxon>
        <taxon>Vertebrata</taxon>
        <taxon>Euteleostomi</taxon>
        <taxon>Mammalia</taxon>
        <taxon>Eutheria</taxon>
        <taxon>Laurasiatheria</taxon>
        <taxon>Artiodactyla</taxon>
        <taxon>Ruminantia</taxon>
        <taxon>Pecora</taxon>
        <taxon>Bovidae</taxon>
        <taxon>Bovinae</taxon>
        <taxon>Bos</taxon>
    </lineage>
</organism>
<gene>
    <name type="primary">DHRS9</name>
</gene>
<proteinExistence type="evidence at transcript level"/>
<dbReference type="EC" id="1.1.1.209" evidence="3"/>
<dbReference type="EC" id="1.1.1.53" evidence="3"/>
<dbReference type="EC" id="1.1.1.105" evidence="3"/>
<dbReference type="EMBL" id="AF362071">
    <property type="protein sequence ID" value="AAN75756.1"/>
    <property type="molecule type" value="mRNA"/>
</dbReference>
<dbReference type="RefSeq" id="NP_777158.1">
    <property type="nucleotide sequence ID" value="NM_174733.2"/>
</dbReference>
<dbReference type="SMR" id="Q8HYR6"/>
<dbReference type="FunCoup" id="Q8HYR6">
    <property type="interactions" value="47"/>
</dbReference>
<dbReference type="STRING" id="9913.ENSBTAP00000005986"/>
<dbReference type="PaxDb" id="9913-ENSBTAP00000055524"/>
<dbReference type="Ensembl" id="ENSBTAT00000005986.6">
    <property type="protein sequence ID" value="ENSBTAP00000005986.4"/>
    <property type="gene ID" value="ENSBTAG00000004557.6"/>
</dbReference>
<dbReference type="GeneID" id="282851"/>
<dbReference type="KEGG" id="bta:282851"/>
<dbReference type="CTD" id="10170"/>
<dbReference type="VEuPathDB" id="HostDB:ENSBTAG00000004557"/>
<dbReference type="VGNC" id="VGNC:28046">
    <property type="gene designation" value="DHRS9"/>
</dbReference>
<dbReference type="eggNOG" id="KOG1610">
    <property type="taxonomic scope" value="Eukaryota"/>
</dbReference>
<dbReference type="GeneTree" id="ENSGT00940000158665"/>
<dbReference type="HOGENOM" id="CLU_010194_2_0_1"/>
<dbReference type="InParanoid" id="Q8HYR6"/>
<dbReference type="OMA" id="PQTHYIA"/>
<dbReference type="OrthoDB" id="294295at2759"/>
<dbReference type="Reactome" id="R-BTA-2453902">
    <property type="pathway name" value="The canonical retinoid cycle in rods (twilight vision)"/>
</dbReference>
<dbReference type="Reactome" id="R-BTA-5365859">
    <property type="pathway name" value="RA biosynthesis pathway"/>
</dbReference>
<dbReference type="Proteomes" id="UP000009136">
    <property type="component" value="Chromosome 2"/>
</dbReference>
<dbReference type="Bgee" id="ENSBTAG00000004557">
    <property type="expression patterns" value="Expressed in milk and 49 other cell types or tissues"/>
</dbReference>
<dbReference type="GO" id="GO:0005789">
    <property type="term" value="C:endoplasmic reticulum membrane"/>
    <property type="evidence" value="ECO:0000250"/>
    <property type="project" value="UniProtKB"/>
</dbReference>
<dbReference type="GO" id="GO:0043231">
    <property type="term" value="C:intracellular membrane-bounded organelle"/>
    <property type="evidence" value="ECO:0000318"/>
    <property type="project" value="GO_Central"/>
</dbReference>
<dbReference type="GO" id="GO:0004022">
    <property type="term" value="F:alcohol dehydrogenase (NAD+) activity"/>
    <property type="evidence" value="ECO:0000250"/>
    <property type="project" value="UniProtKB"/>
</dbReference>
<dbReference type="GO" id="GO:0004745">
    <property type="term" value="F:all-trans-retinol dehydrogenase (NAD+) activity"/>
    <property type="evidence" value="ECO:0000250"/>
    <property type="project" value="UniProtKB"/>
</dbReference>
<dbReference type="GO" id="GO:0047044">
    <property type="term" value="F:androstan-3-alpha,17-beta-diol dehydrogenase (NAD+) activity"/>
    <property type="evidence" value="ECO:0000250"/>
    <property type="project" value="UniProtKB"/>
</dbReference>
<dbReference type="GO" id="GO:0047023">
    <property type="term" value="F:androsterone dehydrogenase [NAD(P)+] activity"/>
    <property type="evidence" value="ECO:0000250"/>
    <property type="project" value="UniProtKB"/>
</dbReference>
<dbReference type="GO" id="GO:0016491">
    <property type="term" value="F:oxidoreductase activity"/>
    <property type="evidence" value="ECO:0000318"/>
    <property type="project" value="GO_Central"/>
</dbReference>
<dbReference type="GO" id="GO:0047035">
    <property type="term" value="F:testosterone dehydrogenase (NAD+) activity"/>
    <property type="evidence" value="ECO:0000250"/>
    <property type="project" value="UniProtKB"/>
</dbReference>
<dbReference type="GO" id="GO:0042904">
    <property type="term" value="P:9-cis-retinoic acid biosynthetic process"/>
    <property type="evidence" value="ECO:0000250"/>
    <property type="project" value="UniProtKB"/>
</dbReference>
<dbReference type="GO" id="GO:0008209">
    <property type="term" value="P:androgen metabolic process"/>
    <property type="evidence" value="ECO:0007669"/>
    <property type="project" value="Ensembl"/>
</dbReference>
<dbReference type="GO" id="GO:0042448">
    <property type="term" value="P:progesterone metabolic process"/>
    <property type="evidence" value="ECO:0007669"/>
    <property type="project" value="Ensembl"/>
</dbReference>
<dbReference type="GO" id="GO:0008202">
    <property type="term" value="P:steroid metabolic process"/>
    <property type="evidence" value="ECO:0000318"/>
    <property type="project" value="GO_Central"/>
</dbReference>
<dbReference type="CDD" id="cd09805">
    <property type="entry name" value="type2_17beta_HSD-like_SDR_c"/>
    <property type="match status" value="1"/>
</dbReference>
<dbReference type="FunFam" id="3.40.50.720:FF:000074">
    <property type="entry name" value="Retinol dehydrogenase type 1"/>
    <property type="match status" value="1"/>
</dbReference>
<dbReference type="Gene3D" id="3.40.50.720">
    <property type="entry name" value="NAD(P)-binding Rossmann-like Domain"/>
    <property type="match status" value="1"/>
</dbReference>
<dbReference type="InterPro" id="IPR036291">
    <property type="entry name" value="NAD(P)-bd_dom_sf"/>
</dbReference>
<dbReference type="InterPro" id="IPR002347">
    <property type="entry name" value="SDR_fam"/>
</dbReference>
<dbReference type="PANTHER" id="PTHR43313:SF15">
    <property type="entry name" value="DEHYDROGENASE_REDUCTASE SDR FAMILY MEMBER 9"/>
    <property type="match status" value="1"/>
</dbReference>
<dbReference type="PANTHER" id="PTHR43313">
    <property type="entry name" value="SHORT-CHAIN DEHYDROGENASE/REDUCTASE FAMILY 9C"/>
    <property type="match status" value="1"/>
</dbReference>
<dbReference type="Pfam" id="PF00106">
    <property type="entry name" value="adh_short"/>
    <property type="match status" value="1"/>
</dbReference>
<dbReference type="PRINTS" id="PR00081">
    <property type="entry name" value="GDHRDH"/>
</dbReference>
<dbReference type="PRINTS" id="PR00080">
    <property type="entry name" value="SDRFAMILY"/>
</dbReference>
<dbReference type="SUPFAM" id="SSF51735">
    <property type="entry name" value="NAD(P)-binding Rossmann-fold domains"/>
    <property type="match status" value="1"/>
</dbReference>